<name>KHSE_VIBA3</name>
<proteinExistence type="inferred from homology"/>
<keyword id="KW-0028">Amino-acid biosynthesis</keyword>
<keyword id="KW-0067">ATP-binding</keyword>
<keyword id="KW-0963">Cytoplasm</keyword>
<keyword id="KW-0418">Kinase</keyword>
<keyword id="KW-0547">Nucleotide-binding</keyword>
<keyword id="KW-0791">Threonine biosynthesis</keyword>
<keyword id="KW-0808">Transferase</keyword>
<gene>
    <name evidence="1" type="primary">thrB</name>
    <name type="ordered locus">VS_0484</name>
</gene>
<accession>B7VJ36</accession>
<comment type="function">
    <text evidence="1">Catalyzes the ATP-dependent phosphorylation of L-homoserine to L-homoserine phosphate.</text>
</comment>
<comment type="catalytic activity">
    <reaction evidence="1">
        <text>L-homoserine + ATP = O-phospho-L-homoserine + ADP + H(+)</text>
        <dbReference type="Rhea" id="RHEA:13985"/>
        <dbReference type="ChEBI" id="CHEBI:15378"/>
        <dbReference type="ChEBI" id="CHEBI:30616"/>
        <dbReference type="ChEBI" id="CHEBI:57476"/>
        <dbReference type="ChEBI" id="CHEBI:57590"/>
        <dbReference type="ChEBI" id="CHEBI:456216"/>
        <dbReference type="EC" id="2.7.1.39"/>
    </reaction>
</comment>
<comment type="pathway">
    <text evidence="1">Amino-acid biosynthesis; L-threonine biosynthesis; L-threonine from L-aspartate: step 4/5.</text>
</comment>
<comment type="subcellular location">
    <subcellularLocation>
        <location evidence="1">Cytoplasm</location>
    </subcellularLocation>
</comment>
<comment type="similarity">
    <text evidence="1">Belongs to the GHMP kinase family. Homoserine kinase subfamily.</text>
</comment>
<reference key="1">
    <citation type="submission" date="2009-02" db="EMBL/GenBank/DDBJ databases">
        <title>Vibrio splendidus str. LGP32 complete genome.</title>
        <authorList>
            <person name="Mazel D."/>
            <person name="Le Roux F."/>
        </authorList>
    </citation>
    <scope>NUCLEOTIDE SEQUENCE [LARGE SCALE GENOMIC DNA]</scope>
    <source>
        <strain>LGP32</strain>
    </source>
</reference>
<evidence type="ECO:0000255" key="1">
    <source>
        <dbReference type="HAMAP-Rule" id="MF_00384"/>
    </source>
</evidence>
<protein>
    <recommendedName>
        <fullName evidence="1">Homoserine kinase</fullName>
        <shortName evidence="1">HK</shortName>
        <shortName evidence="1">HSK</shortName>
        <ecNumber evidence="1">2.7.1.39</ecNumber>
    </recommendedName>
</protein>
<organism>
    <name type="scientific">Vibrio atlanticus (strain LGP32)</name>
    <name type="common">Vibrio splendidus (strain Mel32)</name>
    <dbReference type="NCBI Taxonomy" id="575788"/>
    <lineage>
        <taxon>Bacteria</taxon>
        <taxon>Pseudomonadati</taxon>
        <taxon>Pseudomonadota</taxon>
        <taxon>Gammaproteobacteria</taxon>
        <taxon>Vibrionales</taxon>
        <taxon>Vibrionaceae</taxon>
        <taxon>Vibrio</taxon>
    </lineage>
</organism>
<sequence length="318" mass="34373">MDVVVYAPASIGNVSVGFDVLGAAVSPVDGTLLGDRVMVKAGDEPFSLKTAGSFVSKLPTETKENIVYDCWVVFSRELDKKGISVKSLEMTLEKNMPIGSGLGSSACSIVAALDALNRFHGQPLNETELLALMGEMEGKISGGIHYDNVAPCYLGGVQLMLEELGIISQEVPCFDDWYWVMAYPGIKVSTAEAREILPSQYRRQDVIAHGRHLAGFIHACHSGQPELAAKMIKDVIAEPYREKLLPGFADARKYATSAGALATGISGSGPTLFSICKEQDVAERVARWLEQNYVQNEEGFVHVCRLDKQGSIVTGSEL</sequence>
<dbReference type="EC" id="2.7.1.39" evidence="1"/>
<dbReference type="EMBL" id="FM954972">
    <property type="protein sequence ID" value="CAV17490.1"/>
    <property type="molecule type" value="Genomic_DNA"/>
</dbReference>
<dbReference type="SMR" id="B7VJ36"/>
<dbReference type="STRING" id="575788.VS_0484"/>
<dbReference type="KEGG" id="vsp:VS_0484"/>
<dbReference type="eggNOG" id="COG0083">
    <property type="taxonomic scope" value="Bacteria"/>
</dbReference>
<dbReference type="HOGENOM" id="CLU_041243_1_1_6"/>
<dbReference type="UniPathway" id="UPA00050">
    <property type="reaction ID" value="UER00064"/>
</dbReference>
<dbReference type="Proteomes" id="UP000009100">
    <property type="component" value="Chromosome 1"/>
</dbReference>
<dbReference type="GO" id="GO:0005737">
    <property type="term" value="C:cytoplasm"/>
    <property type="evidence" value="ECO:0007669"/>
    <property type="project" value="UniProtKB-SubCell"/>
</dbReference>
<dbReference type="GO" id="GO:0005524">
    <property type="term" value="F:ATP binding"/>
    <property type="evidence" value="ECO:0007669"/>
    <property type="project" value="UniProtKB-UniRule"/>
</dbReference>
<dbReference type="GO" id="GO:0004413">
    <property type="term" value="F:homoserine kinase activity"/>
    <property type="evidence" value="ECO:0007669"/>
    <property type="project" value="UniProtKB-UniRule"/>
</dbReference>
<dbReference type="GO" id="GO:0009088">
    <property type="term" value="P:threonine biosynthetic process"/>
    <property type="evidence" value="ECO:0007669"/>
    <property type="project" value="UniProtKB-UniRule"/>
</dbReference>
<dbReference type="Gene3D" id="3.30.230.10">
    <property type="match status" value="1"/>
</dbReference>
<dbReference type="Gene3D" id="3.30.70.890">
    <property type="entry name" value="GHMP kinase, C-terminal domain"/>
    <property type="match status" value="1"/>
</dbReference>
<dbReference type="HAMAP" id="MF_00384">
    <property type="entry name" value="Homoser_kinase"/>
    <property type="match status" value="1"/>
</dbReference>
<dbReference type="InterPro" id="IPR013750">
    <property type="entry name" value="GHMP_kinase_C_dom"/>
</dbReference>
<dbReference type="InterPro" id="IPR036554">
    <property type="entry name" value="GHMP_kinase_C_sf"/>
</dbReference>
<dbReference type="InterPro" id="IPR006204">
    <property type="entry name" value="GHMP_kinase_N_dom"/>
</dbReference>
<dbReference type="InterPro" id="IPR006203">
    <property type="entry name" value="GHMP_knse_ATP-bd_CS"/>
</dbReference>
<dbReference type="InterPro" id="IPR000870">
    <property type="entry name" value="Homoserine_kinase"/>
</dbReference>
<dbReference type="InterPro" id="IPR020568">
    <property type="entry name" value="Ribosomal_Su5_D2-typ_SF"/>
</dbReference>
<dbReference type="InterPro" id="IPR014721">
    <property type="entry name" value="Ribsml_uS5_D2-typ_fold_subgr"/>
</dbReference>
<dbReference type="NCBIfam" id="NF002288">
    <property type="entry name" value="PRK01212.1-4"/>
    <property type="match status" value="1"/>
</dbReference>
<dbReference type="NCBIfam" id="TIGR00191">
    <property type="entry name" value="thrB"/>
    <property type="match status" value="1"/>
</dbReference>
<dbReference type="PANTHER" id="PTHR20861:SF1">
    <property type="entry name" value="HOMOSERINE KINASE"/>
    <property type="match status" value="1"/>
</dbReference>
<dbReference type="PANTHER" id="PTHR20861">
    <property type="entry name" value="HOMOSERINE/4-DIPHOSPHOCYTIDYL-2-C-METHYL-D-ERYTHRITOL KINASE"/>
    <property type="match status" value="1"/>
</dbReference>
<dbReference type="Pfam" id="PF08544">
    <property type="entry name" value="GHMP_kinases_C"/>
    <property type="match status" value="1"/>
</dbReference>
<dbReference type="Pfam" id="PF00288">
    <property type="entry name" value="GHMP_kinases_N"/>
    <property type="match status" value="1"/>
</dbReference>
<dbReference type="PIRSF" id="PIRSF000676">
    <property type="entry name" value="Homoser_kin"/>
    <property type="match status" value="1"/>
</dbReference>
<dbReference type="PRINTS" id="PR00958">
    <property type="entry name" value="HOMSERKINASE"/>
</dbReference>
<dbReference type="SUPFAM" id="SSF55060">
    <property type="entry name" value="GHMP Kinase, C-terminal domain"/>
    <property type="match status" value="1"/>
</dbReference>
<dbReference type="SUPFAM" id="SSF54211">
    <property type="entry name" value="Ribosomal protein S5 domain 2-like"/>
    <property type="match status" value="1"/>
</dbReference>
<dbReference type="PROSITE" id="PS00627">
    <property type="entry name" value="GHMP_KINASES_ATP"/>
    <property type="match status" value="1"/>
</dbReference>
<feature type="chain" id="PRO_1000134270" description="Homoserine kinase">
    <location>
        <begin position="1"/>
        <end position="318"/>
    </location>
</feature>
<feature type="binding site" evidence="1">
    <location>
        <begin position="97"/>
        <end position="107"/>
    </location>
    <ligand>
        <name>ATP</name>
        <dbReference type="ChEBI" id="CHEBI:30616"/>
    </ligand>
</feature>